<feature type="initiator methionine" description="Removed" evidence="3">
    <location>
        <position position="1"/>
    </location>
</feature>
<feature type="chain" id="PRO_0000271751" description="Small ribosomal subunit protein uS2">
    <location>
        <begin position="2"/>
        <end position="295"/>
    </location>
</feature>
<feature type="repeat" description="[DE]-W-[ST] 1">
    <location>
        <begin position="230"/>
        <end position="232"/>
    </location>
</feature>
<feature type="repeat" description="[DE]-W-[ST] 2">
    <location>
        <begin position="247"/>
        <end position="249"/>
    </location>
</feature>
<feature type="repeat" description="[DE]-W-[ST] 3">
    <location>
        <begin position="266"/>
        <end position="268"/>
    </location>
</feature>
<feature type="repeat" description="[DE]-W-[ST] 4">
    <location>
        <begin position="275"/>
        <end position="277"/>
    </location>
</feature>
<feature type="repeat" description="[DE]-W-[ST] 5">
    <location>
        <begin position="293"/>
        <end position="295"/>
    </location>
</feature>
<feature type="region of interest" description="Interaction with PPP1R16B" evidence="3">
    <location>
        <begin position="54"/>
        <end position="113"/>
    </location>
</feature>
<feature type="region of interest" description="Laminin-binding" evidence="3">
    <location>
        <begin position="161"/>
        <end position="180"/>
    </location>
</feature>
<feature type="region of interest" description="Laminin-binding" evidence="3">
    <location>
        <begin position="205"/>
        <end position="229"/>
    </location>
</feature>
<feature type="region of interest" description="Laminin-binding" evidence="3">
    <location>
        <begin position="242"/>
        <end position="295"/>
    </location>
</feature>
<feature type="region of interest" description="Disordered" evidence="4">
    <location>
        <begin position="266"/>
        <end position="295"/>
    </location>
</feature>
<feature type="site" description="Cleavage; by ST3; site 1" evidence="3">
    <location>
        <begin position="115"/>
        <end position="116"/>
    </location>
</feature>
<feature type="site" description="Cleavage; by ST3; site 2" evidence="3">
    <location>
        <begin position="133"/>
        <end position="134"/>
    </location>
</feature>
<feature type="modified residue" description="N-acetylserine" evidence="1 3">
    <location>
        <position position="2"/>
    </location>
</feature>
<feature type="modified residue" description="Phosphoserine" evidence="1">
    <location>
        <position position="43"/>
    </location>
</feature>
<feature type="modified residue" description="N6-acetyllysine" evidence="1">
    <location>
        <position position="52"/>
    </location>
</feature>
<feature type="modified residue" description="N6-acetyllysine; alternate" evidence="2">
    <location>
        <position position="89"/>
    </location>
</feature>
<feature type="modified residue" description="Phosphothreonine" evidence="1">
    <location>
        <position position="97"/>
    </location>
</feature>
<feature type="cross-link" description="Glycyl lysine isopeptide (Lys-Gly) (interchain with G-Cter in SUMO2); alternate" evidence="1">
    <location>
        <position position="89"/>
    </location>
</feature>
<reference key="1">
    <citation type="journal article" date="2007" name="Gene">
        <title>Characterization of the porcine multicopy ribosomal protein SA/37-kDa laminin receptor gene family.</title>
        <authorList>
            <person name="Knorr C."/>
            <person name="Beuermann C."/>
            <person name="Beck J."/>
            <person name="Brenig B."/>
        </authorList>
    </citation>
    <scope>NUCLEOTIDE SEQUENCE [MRNA]</scope>
</reference>
<reference key="2">
    <citation type="journal article" date="2005" name="Virol. J.">
        <title>Two dimensional VOPBA reveals laminin receptor (LAMR1) interaction with dengue virus serotypes 1, 2 and 3.</title>
        <authorList>
            <person name="Tio P.H."/>
            <person name="Jong W.W."/>
            <person name="Cardosa M.J."/>
        </authorList>
    </citation>
    <scope>FUNCTION AS A VIRUS RECEPTOR</scope>
</reference>
<organism>
    <name type="scientific">Sus scrofa</name>
    <name type="common">Pig</name>
    <dbReference type="NCBI Taxonomy" id="9823"/>
    <lineage>
        <taxon>Eukaryota</taxon>
        <taxon>Metazoa</taxon>
        <taxon>Chordata</taxon>
        <taxon>Craniata</taxon>
        <taxon>Vertebrata</taxon>
        <taxon>Euteleostomi</taxon>
        <taxon>Mammalia</taxon>
        <taxon>Eutheria</taxon>
        <taxon>Laurasiatheria</taxon>
        <taxon>Artiodactyla</taxon>
        <taxon>Suina</taxon>
        <taxon>Suidae</taxon>
        <taxon>Sus</taxon>
    </lineage>
</organism>
<name>RSSA_PIG</name>
<gene>
    <name evidence="3" type="primary">RPSA</name>
    <name type="synonym">LAMR1</name>
</gene>
<proteinExistence type="evidence at protein level"/>
<comment type="function">
    <text evidence="3 5">Required for the assembly and/or stability of the 40S ribosomal subunit. Required for the processing of the 20S rRNA-precursor to mature 18S rRNA in a late step of the maturation of 40S ribosomal subunits. Also functions as a cell surface receptor for laminin. Plays a role in cell adhesion to the basement membrane and in the consequent activation of signaling transduction pathways. May play a role in cell fate determination and tissue morphogenesis. Also acts as a receptor for several other ligands, including the pathogenic prion protein, viruses, and bacteria. Acts as a PPP1R16B-dependent substrate of PPP1CA.</text>
</comment>
<comment type="subunit">
    <text evidence="3">Monomer (37LRP) and homodimer (67LR). Component of the small ribosomal subunit. Mature ribosomes consist of a small (40S) and a large (60S) subunit. The 40S subunit contains about 33 different proteins and 1 molecule of RNA (18S). The 60S subunit contains about 49 different proteins and 3 molecules of RNA (28S, 5.8S and 5S). Interacts with RPS21. Interacts with several laminins including at least LAMB1. Interacts with MDK. The mature dimeric form interacts with PPP1R16B (via its fourth ankyrin repeat). Interacts with PPP1CA only in the presence of PPP1R16B.</text>
</comment>
<comment type="subcellular location">
    <subcellularLocation>
        <location evidence="3">Cell membrane</location>
    </subcellularLocation>
    <subcellularLocation>
        <location evidence="3">Cytoplasm</location>
    </subcellularLocation>
    <subcellularLocation>
        <location evidence="3">Nucleus</location>
    </subcellularLocation>
    <text evidence="3">67LR is found at the surface of the plasma membrane, with its C-terminal laminin-binding domain accessible to extracellular ligands. 37LRP is found at the cell surface, in the cytoplasm and in the nucleus. Co-localizes with PPP1R16B in the cell membrane.</text>
</comment>
<comment type="PTM">
    <text evidence="3">Acylated. Acylation may be a prerequisite for conversion of the monomeric 37 kDa laminin receptor precursor (37LRP) to the mature dimeric 67 kDa laminin receptor (67LR), and may provide a mechanism for membrane association.</text>
</comment>
<comment type="PTM">
    <text evidence="3">Cleaved by stromelysin-3 (ST3) at the cell surface. Cleavage by stromelysin-3 may be a mechanism to alter cell-extracellular matrix interactions.</text>
</comment>
<comment type="miscellaneous">
    <text>This protein appears to have acquired a second function as a laminin receptor specifically in the vertebrate lineage.</text>
</comment>
<comment type="miscellaneous">
    <text>It is thought that in vertebrates 37/67 kDa laminin receptor acquired a dual function during evolution. It developed from the ribosomal protein SA, playing an essential role in the protein biosynthesis lacking any laminin binding activity, to a cell surface receptor with laminin binding activity.</text>
</comment>
<comment type="similarity">
    <text evidence="3">Belongs to the universal ribosomal protein uS2 family.</text>
</comment>
<accession>Q4GWZ2</accession>
<sequence length="295" mass="32928">MSGALDVLQMKEEDVLKFLAAGTHLGGTNLDFQMEQYIYKRKSDGIYIINLKRTWEKLLLAARAIVAIENPADVSVISSRNTGQRAVLKFAAATGATPIAGRFTPGTFTNQIQAAFREPRLLVVTDPRADHQPLTEASYVNLPTIALCNTDSPLRYVDIAIPCNNKGAHSVGLMWWMLAREVLRMRGTISREHPWEVMPDLYFYRDPEEIEKEEQAAAEKAVTKEEFQGEWTAPAPEFTATQPEVADWSEGVQVPSVPIQQFPTEDWSAQPTTEDWSAAPTAQATEWVGTTTEWS</sequence>
<keyword id="KW-0002">3D-structure</keyword>
<keyword id="KW-0007">Acetylation</keyword>
<keyword id="KW-1003">Cell membrane</keyword>
<keyword id="KW-0963">Cytoplasm</keyword>
<keyword id="KW-1183">Host cell receptor for virus entry</keyword>
<keyword id="KW-1017">Isopeptide bond</keyword>
<keyword id="KW-0472">Membrane</keyword>
<keyword id="KW-0539">Nucleus</keyword>
<keyword id="KW-0597">Phosphoprotein</keyword>
<keyword id="KW-0675">Receptor</keyword>
<keyword id="KW-1185">Reference proteome</keyword>
<keyword id="KW-0677">Repeat</keyword>
<keyword id="KW-0687">Ribonucleoprotein</keyword>
<keyword id="KW-0689">Ribosomal protein</keyword>
<keyword id="KW-0832">Ubl conjugation</keyword>
<dbReference type="EMBL" id="AM050292">
    <property type="protein sequence ID" value="CAJ18354.1"/>
    <property type="molecule type" value="mRNA"/>
</dbReference>
<dbReference type="RefSeq" id="NP_001032223.1">
    <property type="nucleotide sequence ID" value="NM_001037146.2"/>
</dbReference>
<dbReference type="PDB" id="3J7P">
    <property type="method" value="EM"/>
    <property type="resolution" value="3.50 A"/>
    <property type="chains" value="SA=1-295"/>
</dbReference>
<dbReference type="PDB" id="3J7R">
    <property type="method" value="EM"/>
    <property type="resolution" value="3.90 A"/>
    <property type="chains" value="SA=1-295"/>
</dbReference>
<dbReference type="PDBsum" id="3J7P"/>
<dbReference type="PDBsum" id="3J7R"/>
<dbReference type="SMR" id="Q4GWZ2"/>
<dbReference type="FunCoup" id="Q4GWZ2">
    <property type="interactions" value="1886"/>
</dbReference>
<dbReference type="STRING" id="9823.ENSSSCP00000059243"/>
<dbReference type="PaxDb" id="9823-ENSSSCP00000021621"/>
<dbReference type="PeptideAtlas" id="Q4GWZ2"/>
<dbReference type="Ensembl" id="ENSSSCT00000057751.2">
    <property type="protein sequence ID" value="ENSSSCP00000059243.1"/>
    <property type="gene ID" value="ENSSSCG00000037236.3"/>
</dbReference>
<dbReference type="Ensembl" id="ENSSSCT00015095037.1">
    <property type="protein sequence ID" value="ENSSSCP00015039007.1"/>
    <property type="gene ID" value="ENSSSCG00015070750.1"/>
</dbReference>
<dbReference type="Ensembl" id="ENSSSCT00025056901.1">
    <property type="protein sequence ID" value="ENSSSCP00025024065.1"/>
    <property type="gene ID" value="ENSSSCG00025041954.1"/>
</dbReference>
<dbReference type="Ensembl" id="ENSSSCT00035076624.1">
    <property type="protein sequence ID" value="ENSSSCP00035031316.1"/>
    <property type="gene ID" value="ENSSSCG00035057281.1"/>
</dbReference>
<dbReference type="Ensembl" id="ENSSSCT00065106787.1">
    <property type="protein sequence ID" value="ENSSSCP00065047527.1"/>
    <property type="gene ID" value="ENSSSCG00065077237.1"/>
</dbReference>
<dbReference type="Ensembl" id="ENSSSCT00065106791.1">
    <property type="protein sequence ID" value="ENSSSCP00065047528.1"/>
    <property type="gene ID" value="ENSSSCG00065077237.1"/>
</dbReference>
<dbReference type="Ensembl" id="ENSSSCT00065106826.1">
    <property type="protein sequence ID" value="ENSSSCP00065047547.1"/>
    <property type="gene ID" value="ENSSSCG00065077237.1"/>
</dbReference>
<dbReference type="Ensembl" id="ENSSSCT00070022202.1">
    <property type="protein sequence ID" value="ENSSSCP00070018383.1"/>
    <property type="gene ID" value="ENSSSCG00070011407.1"/>
</dbReference>
<dbReference type="Ensembl" id="ENSSSCT00110026495">
    <property type="protein sequence ID" value="ENSSSCP00110017749"/>
    <property type="gene ID" value="ENSSSCG00110013914"/>
</dbReference>
<dbReference type="Ensembl" id="ENSSSCT00115006758">
    <property type="protein sequence ID" value="ENSSSCP00115006337"/>
    <property type="gene ID" value="ENSSSCG00115003946"/>
</dbReference>
<dbReference type="Ensembl" id="ENSSSCT00115039762">
    <property type="protein sequence ID" value="ENSSSCP00115037458"/>
    <property type="gene ID" value="ENSSSCG00115022462"/>
</dbReference>
<dbReference type="Ensembl" id="ENSSSCT00130038112">
    <property type="protein sequence ID" value="ENSSSCP00130026804"/>
    <property type="gene ID" value="ENSSSCG00130019655"/>
</dbReference>
<dbReference type="GeneID" id="641351"/>
<dbReference type="KEGG" id="ssc:641351"/>
<dbReference type="CTD" id="3921"/>
<dbReference type="eggNOG" id="KOG0830">
    <property type="taxonomic scope" value="Eukaryota"/>
</dbReference>
<dbReference type="GeneTree" id="ENSGT00950000183099"/>
<dbReference type="InParanoid" id="Q4GWZ2"/>
<dbReference type="OrthoDB" id="9928405at2759"/>
<dbReference type="Reactome" id="R-SSC-156827">
    <property type="pathway name" value="L13a-mediated translational silencing of Ceruloplasmin expression"/>
</dbReference>
<dbReference type="Reactome" id="R-SSC-1799339">
    <property type="pathway name" value="SRP-dependent cotranslational protein targeting to membrane"/>
</dbReference>
<dbReference type="Reactome" id="R-SSC-72649">
    <property type="pathway name" value="Translation initiation complex formation"/>
</dbReference>
<dbReference type="Reactome" id="R-SSC-72689">
    <property type="pathway name" value="Formation of a pool of free 40S subunits"/>
</dbReference>
<dbReference type="Reactome" id="R-SSC-72695">
    <property type="pathway name" value="Formation of the ternary complex, and subsequently, the 43S complex"/>
</dbReference>
<dbReference type="Reactome" id="R-SSC-72702">
    <property type="pathway name" value="Ribosomal scanning and start codon recognition"/>
</dbReference>
<dbReference type="Reactome" id="R-SSC-72706">
    <property type="pathway name" value="GTP hydrolysis and joining of the 60S ribosomal subunit"/>
</dbReference>
<dbReference type="Reactome" id="R-SSC-975956">
    <property type="pathway name" value="Nonsense Mediated Decay (NMD) independent of the Exon Junction Complex (EJC)"/>
</dbReference>
<dbReference type="Reactome" id="R-SSC-975957">
    <property type="pathway name" value="Nonsense Mediated Decay (NMD) enhanced by the Exon Junction Complex (EJC)"/>
</dbReference>
<dbReference type="Proteomes" id="UP000008227">
    <property type="component" value="Chromosome 13"/>
</dbReference>
<dbReference type="Proteomes" id="UP000314985">
    <property type="component" value="Chromosome 13"/>
</dbReference>
<dbReference type="Proteomes" id="UP000694570">
    <property type="component" value="Unplaced"/>
</dbReference>
<dbReference type="Proteomes" id="UP000694571">
    <property type="component" value="Unplaced"/>
</dbReference>
<dbReference type="Proteomes" id="UP000694720">
    <property type="component" value="Unplaced"/>
</dbReference>
<dbReference type="Proteomes" id="UP000694722">
    <property type="component" value="Unplaced"/>
</dbReference>
<dbReference type="Proteomes" id="UP000694723">
    <property type="component" value="Unplaced"/>
</dbReference>
<dbReference type="Proteomes" id="UP000694724">
    <property type="component" value="Unplaced"/>
</dbReference>
<dbReference type="Proteomes" id="UP000694725">
    <property type="component" value="Unplaced"/>
</dbReference>
<dbReference type="Proteomes" id="UP000694726">
    <property type="component" value="Unplaced"/>
</dbReference>
<dbReference type="Proteomes" id="UP000694727">
    <property type="component" value="Unplaced"/>
</dbReference>
<dbReference type="Proteomes" id="UP000694728">
    <property type="component" value="Unplaced"/>
</dbReference>
<dbReference type="Bgee" id="ENSSSCG00000037236">
    <property type="expression patterns" value="Expressed in granulosa cell and 43 other cell types or tissues"/>
</dbReference>
<dbReference type="ExpressionAtlas" id="Q4GWZ2">
    <property type="expression patterns" value="baseline and differential"/>
</dbReference>
<dbReference type="GO" id="GO:0098556">
    <property type="term" value="C:cytoplasmic side of rough endoplasmic reticulum membrane"/>
    <property type="evidence" value="ECO:0000314"/>
    <property type="project" value="UniProtKB"/>
</dbReference>
<dbReference type="GO" id="GO:0022627">
    <property type="term" value="C:cytosolic small ribosomal subunit"/>
    <property type="evidence" value="ECO:0000314"/>
    <property type="project" value="UniProtKB"/>
</dbReference>
<dbReference type="GO" id="GO:0005634">
    <property type="term" value="C:nucleus"/>
    <property type="evidence" value="ECO:0007669"/>
    <property type="project" value="UniProtKB-SubCell"/>
</dbReference>
<dbReference type="GO" id="GO:0005886">
    <property type="term" value="C:plasma membrane"/>
    <property type="evidence" value="ECO:0000250"/>
    <property type="project" value="UniProtKB"/>
</dbReference>
<dbReference type="GO" id="GO:0043236">
    <property type="term" value="F:laminin binding"/>
    <property type="evidence" value="ECO:0007669"/>
    <property type="project" value="UniProtKB-UniRule"/>
</dbReference>
<dbReference type="GO" id="GO:0005055">
    <property type="term" value="F:laminin receptor activity"/>
    <property type="evidence" value="ECO:0007669"/>
    <property type="project" value="UniProtKB-UniRule"/>
</dbReference>
<dbReference type="GO" id="GO:0003735">
    <property type="term" value="F:structural constituent of ribosome"/>
    <property type="evidence" value="ECO:0000318"/>
    <property type="project" value="GO_Central"/>
</dbReference>
<dbReference type="GO" id="GO:0001618">
    <property type="term" value="F:virus receptor activity"/>
    <property type="evidence" value="ECO:0007669"/>
    <property type="project" value="UniProtKB-KW"/>
</dbReference>
<dbReference type="GO" id="GO:0002181">
    <property type="term" value="P:cytoplasmic translation"/>
    <property type="evidence" value="ECO:0000318"/>
    <property type="project" value="GO_Central"/>
</dbReference>
<dbReference type="GO" id="GO:0000028">
    <property type="term" value="P:ribosomal small subunit assembly"/>
    <property type="evidence" value="ECO:0000318"/>
    <property type="project" value="GO_Central"/>
</dbReference>
<dbReference type="CDD" id="cd01425">
    <property type="entry name" value="RPS2"/>
    <property type="match status" value="1"/>
</dbReference>
<dbReference type="FunFam" id="3.40.50.10490:FF:000012">
    <property type="entry name" value="40S ribosomal protein SA"/>
    <property type="match status" value="1"/>
</dbReference>
<dbReference type="Gene3D" id="3.40.50.10490">
    <property type="entry name" value="Glucose-6-phosphate isomerase like protein, domain 1"/>
    <property type="match status" value="1"/>
</dbReference>
<dbReference type="HAMAP" id="MF_03015">
    <property type="entry name" value="Ribosomal_S2_euk"/>
    <property type="match status" value="1"/>
</dbReference>
<dbReference type="HAMAP" id="MF_03016">
    <property type="entry name" value="Ribosomal_S2_laminin_receptor"/>
    <property type="match status" value="1"/>
</dbReference>
<dbReference type="InterPro" id="IPR001865">
    <property type="entry name" value="Ribosomal_uS2"/>
</dbReference>
<dbReference type="InterPro" id="IPR032281">
    <property type="entry name" value="Ribosomal_uS2_C"/>
</dbReference>
<dbReference type="InterPro" id="IPR018130">
    <property type="entry name" value="Ribosomal_uS2_CS"/>
</dbReference>
<dbReference type="InterPro" id="IPR027498">
    <property type="entry name" value="Ribosomal_uS2_euk"/>
</dbReference>
<dbReference type="InterPro" id="IPR005707">
    <property type="entry name" value="Ribosomal_uS2_euk/arc"/>
</dbReference>
<dbReference type="InterPro" id="IPR023591">
    <property type="entry name" value="Ribosomal_uS2_flav_dom_sf"/>
</dbReference>
<dbReference type="InterPro" id="IPR027504">
    <property type="entry name" value="Ribosomal_uS2_vert"/>
</dbReference>
<dbReference type="NCBIfam" id="TIGR01012">
    <property type="entry name" value="uS2_euk_arch"/>
    <property type="match status" value="1"/>
</dbReference>
<dbReference type="PANTHER" id="PTHR11489">
    <property type="entry name" value="40S RIBOSOMAL PROTEIN SA"/>
    <property type="match status" value="1"/>
</dbReference>
<dbReference type="Pfam" id="PF16122">
    <property type="entry name" value="40S_SA_C"/>
    <property type="match status" value="1"/>
</dbReference>
<dbReference type="Pfam" id="PF00318">
    <property type="entry name" value="Ribosomal_S2"/>
    <property type="match status" value="2"/>
</dbReference>
<dbReference type="PRINTS" id="PR00395">
    <property type="entry name" value="RIBOSOMALS2"/>
</dbReference>
<dbReference type="SUPFAM" id="SSF52313">
    <property type="entry name" value="Ribosomal protein S2"/>
    <property type="match status" value="1"/>
</dbReference>
<dbReference type="PROSITE" id="PS00962">
    <property type="entry name" value="RIBOSOMAL_S2_1"/>
    <property type="match status" value="1"/>
</dbReference>
<dbReference type="PROSITE" id="PS00963">
    <property type="entry name" value="RIBOSOMAL_S2_2"/>
    <property type="match status" value="1"/>
</dbReference>
<evidence type="ECO:0000250" key="1">
    <source>
        <dbReference type="UniProtKB" id="P08865"/>
    </source>
</evidence>
<evidence type="ECO:0000250" key="2">
    <source>
        <dbReference type="UniProtKB" id="P14206"/>
    </source>
</evidence>
<evidence type="ECO:0000255" key="3">
    <source>
        <dbReference type="HAMAP-Rule" id="MF_03016"/>
    </source>
</evidence>
<evidence type="ECO:0000256" key="4">
    <source>
        <dbReference type="SAM" id="MobiDB-lite"/>
    </source>
</evidence>
<evidence type="ECO:0000269" key="5">
    <source>
    </source>
</evidence>
<evidence type="ECO:0000305" key="6"/>
<protein>
    <recommendedName>
        <fullName evidence="3">Small ribosomal subunit protein uS2</fullName>
    </recommendedName>
    <alternativeName>
        <fullName evidence="3">37 kDa laminin receptor precursor</fullName>
        <shortName evidence="3">37LRP</shortName>
    </alternativeName>
    <alternativeName>
        <fullName evidence="3">37/67 kDa laminin receptor</fullName>
        <shortName evidence="3">LRP/LR</shortName>
    </alternativeName>
    <alternativeName>
        <fullName evidence="6">40S ribosomal protein SA</fullName>
    </alternativeName>
    <alternativeName>
        <fullName evidence="3">67 kDa laminin receptor</fullName>
        <shortName evidence="3">67LR</shortName>
    </alternativeName>
    <alternativeName>
        <fullName evidence="3">Laminin receptor 1</fullName>
        <shortName evidence="3">LamR</shortName>
    </alternativeName>
    <alternativeName>
        <fullName evidence="3">Laminin-binding protein precursor p40</fullName>
        <shortName evidence="3">LBP/p40</shortName>
    </alternativeName>
</protein>